<evidence type="ECO:0000255" key="1">
    <source>
        <dbReference type="HAMAP-Rule" id="MF_00607"/>
    </source>
</evidence>
<reference key="1">
    <citation type="journal article" date="2004" name="Proc. Natl. Acad. Sci. U.S.A.">
        <title>Comparison of the genome of the oral pathogen Treponema denticola with other spirochete genomes.</title>
        <authorList>
            <person name="Seshadri R."/>
            <person name="Myers G.S.A."/>
            <person name="Tettelin H."/>
            <person name="Eisen J.A."/>
            <person name="Heidelberg J.F."/>
            <person name="Dodson R.J."/>
            <person name="Davidsen T.M."/>
            <person name="DeBoy R.T."/>
            <person name="Fouts D.E."/>
            <person name="Haft D.H."/>
            <person name="Selengut J."/>
            <person name="Ren Q."/>
            <person name="Brinkac L.M."/>
            <person name="Madupu R."/>
            <person name="Kolonay J.F."/>
            <person name="Durkin S.A."/>
            <person name="Daugherty S.C."/>
            <person name="Shetty J."/>
            <person name="Shvartsbeyn A."/>
            <person name="Gebregeorgis E."/>
            <person name="Geer K."/>
            <person name="Tsegaye G."/>
            <person name="Malek J.A."/>
            <person name="Ayodeji B."/>
            <person name="Shatsman S."/>
            <person name="McLeod M.P."/>
            <person name="Smajs D."/>
            <person name="Howell J.K."/>
            <person name="Pal S."/>
            <person name="Amin A."/>
            <person name="Vashisth P."/>
            <person name="McNeill T.Z."/>
            <person name="Xiang Q."/>
            <person name="Sodergren E."/>
            <person name="Baca E."/>
            <person name="Weinstock G.M."/>
            <person name="Norris S.J."/>
            <person name="Fraser C.M."/>
            <person name="Paulsen I.T."/>
        </authorList>
    </citation>
    <scope>NUCLEOTIDE SEQUENCE [LARGE SCALE GENOMIC DNA]</scope>
    <source>
        <strain>ATCC 35405 / DSM 14222 / CIP 103919 / JCM 8153 / KCTC 15104</strain>
    </source>
</reference>
<name>RSMA_TREDE</name>
<sequence>MNSGFFLSPPNYDSPAELKSLLETLGFAMQKKFGQNFLIDKKTRENLISFLTLDKGTRVWEVGPGLGAMTYLLLEKGVHLTAFEIDKGFISLLKKIFLENSKQNFTLIEGDVQKNWLPYLIEHGKPNVFFGNLPYNIASDLIASTVEAGVVFDTMLFTVQKEAAERITARPGNKNYTAFSVLCSLFYECKIVKTIPASAFWPQPNVESAAVLFKAKKEFAEYKNFKLFIKIVKALFSSRRKNIKNNLGSWMKSNGYGDKIDLVLERSGLSGNLRAESLALYDFLLLSDIIGHL</sequence>
<proteinExistence type="inferred from homology"/>
<feature type="chain" id="PRO_0000101633" description="Ribosomal RNA small subunit methyltransferase A">
    <location>
        <begin position="1"/>
        <end position="293"/>
    </location>
</feature>
<feature type="binding site" evidence="1">
    <location>
        <position position="36"/>
    </location>
    <ligand>
        <name>S-adenosyl-L-methionine</name>
        <dbReference type="ChEBI" id="CHEBI:59789"/>
    </ligand>
</feature>
<feature type="binding site" evidence="1">
    <location>
        <position position="38"/>
    </location>
    <ligand>
        <name>S-adenosyl-L-methionine</name>
        <dbReference type="ChEBI" id="CHEBI:59789"/>
    </ligand>
</feature>
<feature type="binding site" evidence="1">
    <location>
        <position position="63"/>
    </location>
    <ligand>
        <name>S-adenosyl-L-methionine</name>
        <dbReference type="ChEBI" id="CHEBI:59789"/>
    </ligand>
</feature>
<feature type="binding site" evidence="1">
    <location>
        <position position="84"/>
    </location>
    <ligand>
        <name>S-adenosyl-L-methionine</name>
        <dbReference type="ChEBI" id="CHEBI:59789"/>
    </ligand>
</feature>
<feature type="binding site" evidence="1">
    <location>
        <position position="111"/>
    </location>
    <ligand>
        <name>S-adenosyl-L-methionine</name>
        <dbReference type="ChEBI" id="CHEBI:59789"/>
    </ligand>
</feature>
<feature type="binding site" evidence="1">
    <location>
        <position position="132"/>
    </location>
    <ligand>
        <name>S-adenosyl-L-methionine</name>
        <dbReference type="ChEBI" id="CHEBI:59789"/>
    </ligand>
</feature>
<protein>
    <recommendedName>
        <fullName evidence="1">Ribosomal RNA small subunit methyltransferase A</fullName>
        <ecNumber evidence="1">2.1.1.182</ecNumber>
    </recommendedName>
    <alternativeName>
        <fullName evidence="1">16S rRNA (adenine(1518)-N(6)/adenine(1519)-N(6))-dimethyltransferase</fullName>
    </alternativeName>
    <alternativeName>
        <fullName evidence="1">16S rRNA dimethyladenosine transferase</fullName>
    </alternativeName>
    <alternativeName>
        <fullName evidence="1">16S rRNA dimethylase</fullName>
    </alternativeName>
    <alternativeName>
        <fullName evidence="1">S-adenosylmethionine-6-N', N'-adenosyl(rRNA) dimethyltransferase</fullName>
    </alternativeName>
</protein>
<gene>
    <name evidence="1" type="primary">rsmA</name>
    <name evidence="1" type="synonym">ksgA</name>
    <name type="ordered locus">TDE_1080</name>
</gene>
<organism>
    <name type="scientific">Treponema denticola (strain ATCC 35405 / DSM 14222 / CIP 103919 / JCM 8153 / KCTC 15104)</name>
    <dbReference type="NCBI Taxonomy" id="243275"/>
    <lineage>
        <taxon>Bacteria</taxon>
        <taxon>Pseudomonadati</taxon>
        <taxon>Spirochaetota</taxon>
        <taxon>Spirochaetia</taxon>
        <taxon>Spirochaetales</taxon>
        <taxon>Treponemataceae</taxon>
        <taxon>Treponema</taxon>
    </lineage>
</organism>
<accession>Q73NS2</accession>
<dbReference type="EC" id="2.1.1.182" evidence="1"/>
<dbReference type="EMBL" id="AE017226">
    <property type="protein sequence ID" value="AAS11569.1"/>
    <property type="molecule type" value="Genomic_DNA"/>
</dbReference>
<dbReference type="RefSeq" id="NP_971688.1">
    <property type="nucleotide sequence ID" value="NC_002967.9"/>
</dbReference>
<dbReference type="RefSeq" id="WP_002682389.1">
    <property type="nucleotide sequence ID" value="NC_002967.9"/>
</dbReference>
<dbReference type="SMR" id="Q73NS2"/>
<dbReference type="STRING" id="243275.TDE_1080"/>
<dbReference type="PaxDb" id="243275-TDE_1080"/>
<dbReference type="GeneID" id="2739092"/>
<dbReference type="KEGG" id="tde:TDE_1080"/>
<dbReference type="PATRIC" id="fig|243275.7.peg.1040"/>
<dbReference type="eggNOG" id="COG0030">
    <property type="taxonomic scope" value="Bacteria"/>
</dbReference>
<dbReference type="HOGENOM" id="CLU_041220_0_2_12"/>
<dbReference type="OrthoDB" id="9814755at2"/>
<dbReference type="Proteomes" id="UP000008212">
    <property type="component" value="Chromosome"/>
</dbReference>
<dbReference type="GO" id="GO:0005829">
    <property type="term" value="C:cytosol"/>
    <property type="evidence" value="ECO:0007669"/>
    <property type="project" value="TreeGrafter"/>
</dbReference>
<dbReference type="GO" id="GO:0052908">
    <property type="term" value="F:16S rRNA (adenine(1518)-N(6)/adenine(1519)-N(6))-dimethyltransferase activity"/>
    <property type="evidence" value="ECO:0007669"/>
    <property type="project" value="UniProtKB-EC"/>
</dbReference>
<dbReference type="GO" id="GO:0003723">
    <property type="term" value="F:RNA binding"/>
    <property type="evidence" value="ECO:0007669"/>
    <property type="project" value="UniProtKB-KW"/>
</dbReference>
<dbReference type="CDD" id="cd02440">
    <property type="entry name" value="AdoMet_MTases"/>
    <property type="match status" value="1"/>
</dbReference>
<dbReference type="Gene3D" id="1.10.8.100">
    <property type="entry name" value="Ribosomal RNA adenine dimethylase-like, domain 2"/>
    <property type="match status" value="1"/>
</dbReference>
<dbReference type="Gene3D" id="3.40.50.150">
    <property type="entry name" value="Vaccinia Virus protein VP39"/>
    <property type="match status" value="1"/>
</dbReference>
<dbReference type="HAMAP" id="MF_00607">
    <property type="entry name" value="16SrRNA_methyltr_A"/>
    <property type="match status" value="1"/>
</dbReference>
<dbReference type="InterPro" id="IPR001737">
    <property type="entry name" value="KsgA/Erm"/>
</dbReference>
<dbReference type="InterPro" id="IPR023165">
    <property type="entry name" value="rRNA_Ade_diMease-like_C"/>
</dbReference>
<dbReference type="InterPro" id="IPR020596">
    <property type="entry name" value="rRNA_Ade_Mease_Trfase_CS"/>
</dbReference>
<dbReference type="InterPro" id="IPR020598">
    <property type="entry name" value="rRNA_Ade_methylase_Trfase_N"/>
</dbReference>
<dbReference type="InterPro" id="IPR011530">
    <property type="entry name" value="rRNA_adenine_dimethylase"/>
</dbReference>
<dbReference type="InterPro" id="IPR029063">
    <property type="entry name" value="SAM-dependent_MTases_sf"/>
</dbReference>
<dbReference type="NCBIfam" id="TIGR00755">
    <property type="entry name" value="ksgA"/>
    <property type="match status" value="1"/>
</dbReference>
<dbReference type="PANTHER" id="PTHR11727">
    <property type="entry name" value="DIMETHYLADENOSINE TRANSFERASE"/>
    <property type="match status" value="1"/>
</dbReference>
<dbReference type="PANTHER" id="PTHR11727:SF7">
    <property type="entry name" value="DIMETHYLADENOSINE TRANSFERASE-RELATED"/>
    <property type="match status" value="1"/>
</dbReference>
<dbReference type="Pfam" id="PF00398">
    <property type="entry name" value="RrnaAD"/>
    <property type="match status" value="1"/>
</dbReference>
<dbReference type="SMART" id="SM00650">
    <property type="entry name" value="rADc"/>
    <property type="match status" value="1"/>
</dbReference>
<dbReference type="SUPFAM" id="SSF53335">
    <property type="entry name" value="S-adenosyl-L-methionine-dependent methyltransferases"/>
    <property type="match status" value="1"/>
</dbReference>
<dbReference type="PROSITE" id="PS01131">
    <property type="entry name" value="RRNA_A_DIMETH"/>
    <property type="match status" value="1"/>
</dbReference>
<dbReference type="PROSITE" id="PS51689">
    <property type="entry name" value="SAM_RNA_A_N6_MT"/>
    <property type="match status" value="1"/>
</dbReference>
<keyword id="KW-0963">Cytoplasm</keyword>
<keyword id="KW-0489">Methyltransferase</keyword>
<keyword id="KW-1185">Reference proteome</keyword>
<keyword id="KW-0694">RNA-binding</keyword>
<keyword id="KW-0698">rRNA processing</keyword>
<keyword id="KW-0949">S-adenosyl-L-methionine</keyword>
<keyword id="KW-0808">Transferase</keyword>
<comment type="function">
    <text evidence="1">Specifically dimethylates two adjacent adenosines (A1518 and A1519) in the loop of a conserved hairpin near the 3'-end of 16S rRNA in the 30S particle. May play a critical role in biogenesis of 30S subunits.</text>
</comment>
<comment type="catalytic activity">
    <reaction evidence="1">
        <text>adenosine(1518)/adenosine(1519) in 16S rRNA + 4 S-adenosyl-L-methionine = N(6)-dimethyladenosine(1518)/N(6)-dimethyladenosine(1519) in 16S rRNA + 4 S-adenosyl-L-homocysteine + 4 H(+)</text>
        <dbReference type="Rhea" id="RHEA:19609"/>
        <dbReference type="Rhea" id="RHEA-COMP:10232"/>
        <dbReference type="Rhea" id="RHEA-COMP:10233"/>
        <dbReference type="ChEBI" id="CHEBI:15378"/>
        <dbReference type="ChEBI" id="CHEBI:57856"/>
        <dbReference type="ChEBI" id="CHEBI:59789"/>
        <dbReference type="ChEBI" id="CHEBI:74411"/>
        <dbReference type="ChEBI" id="CHEBI:74493"/>
        <dbReference type="EC" id="2.1.1.182"/>
    </reaction>
</comment>
<comment type="subcellular location">
    <subcellularLocation>
        <location evidence="1">Cytoplasm</location>
    </subcellularLocation>
</comment>
<comment type="similarity">
    <text evidence="1">Belongs to the class I-like SAM-binding methyltransferase superfamily. rRNA adenine N(6)-methyltransferase family. RsmA subfamily.</text>
</comment>